<dbReference type="EC" id="2.1.1.-" evidence="1"/>
<dbReference type="EMBL" id="CR382123">
    <property type="protein sequence ID" value="CAH01260.1"/>
    <property type="molecule type" value="Genomic_DNA"/>
</dbReference>
<dbReference type="RefSeq" id="XP_452409.1">
    <property type="nucleotide sequence ID" value="XM_452409.1"/>
</dbReference>
<dbReference type="SMR" id="Q6CUI0"/>
<dbReference type="FunCoup" id="Q6CUI0">
    <property type="interactions" value="158"/>
</dbReference>
<dbReference type="STRING" id="284590.Q6CUI0"/>
<dbReference type="PaxDb" id="284590-Q6CUI0"/>
<dbReference type="KEGG" id="kla:KLLA0_C04708g"/>
<dbReference type="eggNOG" id="KOG2920">
    <property type="taxonomic scope" value="Eukaryota"/>
</dbReference>
<dbReference type="HOGENOM" id="CLU_032409_0_0_1"/>
<dbReference type="InParanoid" id="Q6CUI0"/>
<dbReference type="OMA" id="SEYPLEW"/>
<dbReference type="Proteomes" id="UP000000598">
    <property type="component" value="Chromosome C"/>
</dbReference>
<dbReference type="GO" id="GO:0005737">
    <property type="term" value="C:cytoplasm"/>
    <property type="evidence" value="ECO:0007669"/>
    <property type="project" value="UniProtKB-SubCell"/>
</dbReference>
<dbReference type="GO" id="GO:0071885">
    <property type="term" value="F:N-terminal protein N-methyltransferase activity"/>
    <property type="evidence" value="ECO:0007669"/>
    <property type="project" value="UniProtKB-UniRule"/>
</dbReference>
<dbReference type="GO" id="GO:0016279">
    <property type="term" value="F:protein-lysine N-methyltransferase activity"/>
    <property type="evidence" value="ECO:0007669"/>
    <property type="project" value="UniProtKB-UniRule"/>
</dbReference>
<dbReference type="GO" id="GO:0032259">
    <property type="term" value="P:methylation"/>
    <property type="evidence" value="ECO:0007669"/>
    <property type="project" value="UniProtKB-KW"/>
</dbReference>
<dbReference type="CDD" id="cd02440">
    <property type="entry name" value="AdoMet_MTases"/>
    <property type="match status" value="1"/>
</dbReference>
<dbReference type="Gene3D" id="3.40.50.150">
    <property type="entry name" value="Vaccinia Virus protein VP39"/>
    <property type="match status" value="1"/>
</dbReference>
<dbReference type="HAMAP" id="MF_03223">
    <property type="entry name" value="Methyltr_EFM7"/>
    <property type="match status" value="1"/>
</dbReference>
<dbReference type="InterPro" id="IPR025784">
    <property type="entry name" value="EFM7"/>
</dbReference>
<dbReference type="InterPro" id="IPR019410">
    <property type="entry name" value="Methyltransf_16"/>
</dbReference>
<dbReference type="InterPro" id="IPR029063">
    <property type="entry name" value="SAM-dependent_MTases_sf"/>
</dbReference>
<dbReference type="PANTHER" id="PTHR14614">
    <property type="entry name" value="HEPATOCELLULAR CARCINOMA-ASSOCIATED ANTIGEN"/>
    <property type="match status" value="1"/>
</dbReference>
<dbReference type="PANTHER" id="PTHR14614:SF10">
    <property type="entry name" value="PROTEIN N-TERMINAL AND LYSINE N-METHYLTRANSFERASE EFM7"/>
    <property type="match status" value="1"/>
</dbReference>
<dbReference type="Pfam" id="PF10294">
    <property type="entry name" value="Methyltransf_16"/>
    <property type="match status" value="1"/>
</dbReference>
<dbReference type="SUPFAM" id="SSF53335">
    <property type="entry name" value="S-adenosyl-L-methionine-dependent methyltransferases"/>
    <property type="match status" value="1"/>
</dbReference>
<dbReference type="PROSITE" id="PS51560">
    <property type="entry name" value="SAM_MT_NNT1"/>
    <property type="match status" value="1"/>
</dbReference>
<reference key="1">
    <citation type="journal article" date="2004" name="Nature">
        <title>Genome evolution in yeasts.</title>
        <authorList>
            <person name="Dujon B."/>
            <person name="Sherman D."/>
            <person name="Fischer G."/>
            <person name="Durrens P."/>
            <person name="Casaregola S."/>
            <person name="Lafontaine I."/>
            <person name="de Montigny J."/>
            <person name="Marck C."/>
            <person name="Neuveglise C."/>
            <person name="Talla E."/>
            <person name="Goffard N."/>
            <person name="Frangeul L."/>
            <person name="Aigle M."/>
            <person name="Anthouard V."/>
            <person name="Babour A."/>
            <person name="Barbe V."/>
            <person name="Barnay S."/>
            <person name="Blanchin S."/>
            <person name="Beckerich J.-M."/>
            <person name="Beyne E."/>
            <person name="Bleykasten C."/>
            <person name="Boisrame A."/>
            <person name="Boyer J."/>
            <person name="Cattolico L."/>
            <person name="Confanioleri F."/>
            <person name="de Daruvar A."/>
            <person name="Despons L."/>
            <person name="Fabre E."/>
            <person name="Fairhead C."/>
            <person name="Ferry-Dumazet H."/>
            <person name="Groppi A."/>
            <person name="Hantraye F."/>
            <person name="Hennequin C."/>
            <person name="Jauniaux N."/>
            <person name="Joyet P."/>
            <person name="Kachouri R."/>
            <person name="Kerrest A."/>
            <person name="Koszul R."/>
            <person name="Lemaire M."/>
            <person name="Lesur I."/>
            <person name="Ma L."/>
            <person name="Muller H."/>
            <person name="Nicaud J.-M."/>
            <person name="Nikolski M."/>
            <person name="Oztas S."/>
            <person name="Ozier-Kalogeropoulos O."/>
            <person name="Pellenz S."/>
            <person name="Potier S."/>
            <person name="Richard G.-F."/>
            <person name="Straub M.-L."/>
            <person name="Suleau A."/>
            <person name="Swennen D."/>
            <person name="Tekaia F."/>
            <person name="Wesolowski-Louvel M."/>
            <person name="Westhof E."/>
            <person name="Wirth B."/>
            <person name="Zeniou-Meyer M."/>
            <person name="Zivanovic Y."/>
            <person name="Bolotin-Fukuhara M."/>
            <person name="Thierry A."/>
            <person name="Bouchier C."/>
            <person name="Caudron B."/>
            <person name="Scarpelli C."/>
            <person name="Gaillardin C."/>
            <person name="Weissenbach J."/>
            <person name="Wincker P."/>
            <person name="Souciet J.-L."/>
        </authorList>
    </citation>
    <scope>NUCLEOTIDE SEQUENCE [LARGE SCALE GENOMIC DNA]</scope>
    <source>
        <strain>ATCC 8585 / CBS 2359 / DSM 70799 / NBRC 1267 / NRRL Y-1140 / WM37</strain>
    </source>
</reference>
<sequence>MSDIESLNGGDLFAEPSDFYKPPPEPHFATYTRDDVPESSTSQQKDIKLRLVGSSPLWGHLLWNAGIYTAKHMDSHPEEVQDKLVLELGAAGALPTIIAGLLGARKVVSTDYPDADLISNIQYNVDHNIYGGEELFKDEEKRSKQMANRKVVVEGYIWGNDYEPILKHLPQDQQKFDLIILSDLVFNHTEHAKLFKTTKDLLRENGKALVVFSPHRPWLLENDLAFFKDCEEFGLKSDLIELTHWKPMFDEDEETVEIRSSIYAYYLSHI</sequence>
<protein>
    <recommendedName>
        <fullName evidence="1">Protein N-terminal and lysine N-methyltransferase EFM7</fullName>
        <ecNumber evidence="1">2.1.1.-</ecNumber>
    </recommendedName>
    <alternativeName>
        <fullName evidence="1">Elongation factor methyltransferase 7</fullName>
    </alternativeName>
</protein>
<gene>
    <name evidence="1" type="primary">EFM7</name>
    <name type="synonym">NNT1</name>
    <name type="ordered locus">KLLA0C04708g</name>
</gene>
<comment type="function">
    <text evidence="1">S-adenosyl-L-methionine-dependent protein methyltransferase that trimethylates the N-terminal glycine 'Gly-2' of elongation factor 1-alpha, before also catalyzing the mono- and dimethylation of 'Lys-3'.</text>
</comment>
<comment type="subcellular location">
    <subcellularLocation>
        <location evidence="1">Cytoplasm</location>
    </subcellularLocation>
</comment>
<comment type="similarity">
    <text evidence="1">Belongs to the class I-like SAM-binding methyltransferase superfamily. EFM7 family.</text>
</comment>
<evidence type="ECO:0000255" key="1">
    <source>
        <dbReference type="HAMAP-Rule" id="MF_03223"/>
    </source>
</evidence>
<evidence type="ECO:0000256" key="2">
    <source>
        <dbReference type="SAM" id="MobiDB-lite"/>
    </source>
</evidence>
<organism>
    <name type="scientific">Kluyveromyces lactis (strain ATCC 8585 / CBS 2359 / DSM 70799 / NBRC 1267 / NRRL Y-1140 / WM37)</name>
    <name type="common">Yeast</name>
    <name type="synonym">Candida sphaerica</name>
    <dbReference type="NCBI Taxonomy" id="284590"/>
    <lineage>
        <taxon>Eukaryota</taxon>
        <taxon>Fungi</taxon>
        <taxon>Dikarya</taxon>
        <taxon>Ascomycota</taxon>
        <taxon>Saccharomycotina</taxon>
        <taxon>Saccharomycetes</taxon>
        <taxon>Saccharomycetales</taxon>
        <taxon>Saccharomycetaceae</taxon>
        <taxon>Kluyveromyces</taxon>
    </lineage>
</organism>
<name>EFM7_KLULA</name>
<proteinExistence type="inferred from homology"/>
<keyword id="KW-0963">Cytoplasm</keyword>
<keyword id="KW-0489">Methyltransferase</keyword>
<keyword id="KW-1185">Reference proteome</keyword>
<keyword id="KW-0949">S-adenosyl-L-methionine</keyword>
<keyword id="KW-0808">Transferase</keyword>
<feature type="chain" id="PRO_0000096897" description="Protein N-terminal and lysine N-methyltransferase EFM7">
    <location>
        <begin position="1"/>
        <end position="270"/>
    </location>
</feature>
<feature type="region of interest" description="Disordered" evidence="2">
    <location>
        <begin position="1"/>
        <end position="45"/>
    </location>
</feature>
<feature type="binding site" evidence="1">
    <location>
        <position position="63"/>
    </location>
    <ligand>
        <name>S-adenosyl-L-methionine</name>
        <dbReference type="ChEBI" id="CHEBI:59789"/>
    </ligand>
</feature>
<feature type="binding site" evidence="1">
    <location>
        <begin position="89"/>
        <end position="91"/>
    </location>
    <ligand>
        <name>S-adenosyl-L-methionine</name>
        <dbReference type="ChEBI" id="CHEBI:59789"/>
    </ligand>
</feature>
<feature type="binding site" evidence="1">
    <location>
        <position position="111"/>
    </location>
    <ligand>
        <name>S-adenosyl-L-methionine</name>
        <dbReference type="ChEBI" id="CHEBI:59789"/>
    </ligand>
</feature>
<feature type="binding site" evidence="1">
    <location>
        <position position="158"/>
    </location>
    <ligand>
        <name>S-adenosyl-L-methionine</name>
        <dbReference type="ChEBI" id="CHEBI:59789"/>
    </ligand>
</feature>
<feature type="binding site" evidence="1">
    <location>
        <position position="182"/>
    </location>
    <ligand>
        <name>S-adenosyl-L-methionine</name>
        <dbReference type="ChEBI" id="CHEBI:59789"/>
    </ligand>
</feature>
<accession>Q6CUI0</accession>